<protein>
    <recommendedName>
        <fullName evidence="1">Ribonuclease HII</fullName>
        <shortName evidence="1">RNase HII</shortName>
        <ecNumber evidence="1">3.1.26.4</ecNumber>
    </recommendedName>
</protein>
<keyword id="KW-0963">Cytoplasm</keyword>
<keyword id="KW-0255">Endonuclease</keyword>
<keyword id="KW-0378">Hydrolase</keyword>
<keyword id="KW-0464">Manganese</keyword>
<keyword id="KW-0479">Metal-binding</keyword>
<keyword id="KW-0540">Nuclease</keyword>
<keyword id="KW-1185">Reference proteome</keyword>
<gene>
    <name evidence="1" type="primary">rnhB</name>
    <name type="ordered locus">Gura_3757</name>
</gene>
<accession>A5G7Z2</accession>
<comment type="function">
    <text evidence="1">Endonuclease that specifically degrades the RNA of RNA-DNA hybrids.</text>
</comment>
<comment type="catalytic activity">
    <reaction evidence="1">
        <text>Endonucleolytic cleavage to 5'-phosphomonoester.</text>
        <dbReference type="EC" id="3.1.26.4"/>
    </reaction>
</comment>
<comment type="cofactor">
    <cofactor evidence="1">
        <name>Mn(2+)</name>
        <dbReference type="ChEBI" id="CHEBI:29035"/>
    </cofactor>
    <cofactor evidence="1">
        <name>Mg(2+)</name>
        <dbReference type="ChEBI" id="CHEBI:18420"/>
    </cofactor>
    <text evidence="1">Manganese or magnesium. Binds 1 divalent metal ion per monomer in the absence of substrate. May bind a second metal ion after substrate binding.</text>
</comment>
<comment type="subcellular location">
    <subcellularLocation>
        <location evidence="1">Cytoplasm</location>
    </subcellularLocation>
</comment>
<comment type="similarity">
    <text evidence="1">Belongs to the RNase HII family.</text>
</comment>
<dbReference type="EC" id="3.1.26.4" evidence="1"/>
<dbReference type="EMBL" id="CP000698">
    <property type="protein sequence ID" value="ABQ27910.1"/>
    <property type="molecule type" value="Genomic_DNA"/>
</dbReference>
<dbReference type="RefSeq" id="WP_011940559.1">
    <property type="nucleotide sequence ID" value="NC_009483.1"/>
</dbReference>
<dbReference type="SMR" id="A5G7Z2"/>
<dbReference type="STRING" id="351605.Gura_3757"/>
<dbReference type="KEGG" id="gur:Gura_3757"/>
<dbReference type="HOGENOM" id="CLU_036532_3_2_7"/>
<dbReference type="OrthoDB" id="9803420at2"/>
<dbReference type="Proteomes" id="UP000006695">
    <property type="component" value="Chromosome"/>
</dbReference>
<dbReference type="GO" id="GO:0005737">
    <property type="term" value="C:cytoplasm"/>
    <property type="evidence" value="ECO:0007669"/>
    <property type="project" value="UniProtKB-SubCell"/>
</dbReference>
<dbReference type="GO" id="GO:0032299">
    <property type="term" value="C:ribonuclease H2 complex"/>
    <property type="evidence" value="ECO:0007669"/>
    <property type="project" value="TreeGrafter"/>
</dbReference>
<dbReference type="GO" id="GO:0030145">
    <property type="term" value="F:manganese ion binding"/>
    <property type="evidence" value="ECO:0007669"/>
    <property type="project" value="UniProtKB-UniRule"/>
</dbReference>
<dbReference type="GO" id="GO:0003723">
    <property type="term" value="F:RNA binding"/>
    <property type="evidence" value="ECO:0007669"/>
    <property type="project" value="InterPro"/>
</dbReference>
<dbReference type="GO" id="GO:0004523">
    <property type="term" value="F:RNA-DNA hybrid ribonuclease activity"/>
    <property type="evidence" value="ECO:0007669"/>
    <property type="project" value="UniProtKB-UniRule"/>
</dbReference>
<dbReference type="GO" id="GO:0043137">
    <property type="term" value="P:DNA replication, removal of RNA primer"/>
    <property type="evidence" value="ECO:0007669"/>
    <property type="project" value="TreeGrafter"/>
</dbReference>
<dbReference type="GO" id="GO:0006298">
    <property type="term" value="P:mismatch repair"/>
    <property type="evidence" value="ECO:0007669"/>
    <property type="project" value="TreeGrafter"/>
</dbReference>
<dbReference type="CDD" id="cd07182">
    <property type="entry name" value="RNase_HII_bacteria_HII_like"/>
    <property type="match status" value="1"/>
</dbReference>
<dbReference type="FunFam" id="3.30.420.10:FF:000006">
    <property type="entry name" value="Ribonuclease HII"/>
    <property type="match status" value="1"/>
</dbReference>
<dbReference type="Gene3D" id="3.30.420.10">
    <property type="entry name" value="Ribonuclease H-like superfamily/Ribonuclease H"/>
    <property type="match status" value="1"/>
</dbReference>
<dbReference type="HAMAP" id="MF_00052_B">
    <property type="entry name" value="RNase_HII_B"/>
    <property type="match status" value="1"/>
</dbReference>
<dbReference type="InterPro" id="IPR022898">
    <property type="entry name" value="RNase_HII"/>
</dbReference>
<dbReference type="InterPro" id="IPR001352">
    <property type="entry name" value="RNase_HII/HIII"/>
</dbReference>
<dbReference type="InterPro" id="IPR024567">
    <property type="entry name" value="RNase_HII/HIII_dom"/>
</dbReference>
<dbReference type="InterPro" id="IPR012337">
    <property type="entry name" value="RNaseH-like_sf"/>
</dbReference>
<dbReference type="InterPro" id="IPR036397">
    <property type="entry name" value="RNaseH_sf"/>
</dbReference>
<dbReference type="NCBIfam" id="NF000594">
    <property type="entry name" value="PRK00015.1-1"/>
    <property type="match status" value="1"/>
</dbReference>
<dbReference type="NCBIfam" id="NF000595">
    <property type="entry name" value="PRK00015.1-3"/>
    <property type="match status" value="1"/>
</dbReference>
<dbReference type="PANTHER" id="PTHR10954">
    <property type="entry name" value="RIBONUCLEASE H2 SUBUNIT A"/>
    <property type="match status" value="1"/>
</dbReference>
<dbReference type="PANTHER" id="PTHR10954:SF18">
    <property type="entry name" value="RIBONUCLEASE HII"/>
    <property type="match status" value="1"/>
</dbReference>
<dbReference type="Pfam" id="PF01351">
    <property type="entry name" value="RNase_HII"/>
    <property type="match status" value="1"/>
</dbReference>
<dbReference type="SUPFAM" id="SSF53098">
    <property type="entry name" value="Ribonuclease H-like"/>
    <property type="match status" value="1"/>
</dbReference>
<dbReference type="PROSITE" id="PS51975">
    <property type="entry name" value="RNASE_H_2"/>
    <property type="match status" value="1"/>
</dbReference>
<evidence type="ECO:0000255" key="1">
    <source>
        <dbReference type="HAMAP-Rule" id="MF_00052"/>
    </source>
</evidence>
<evidence type="ECO:0000255" key="2">
    <source>
        <dbReference type="PROSITE-ProRule" id="PRU01319"/>
    </source>
</evidence>
<name>RNH2_GEOUR</name>
<proteinExistence type="inferred from homology"/>
<feature type="chain" id="PRO_0000334900" description="Ribonuclease HII">
    <location>
        <begin position="1"/>
        <end position="216"/>
    </location>
</feature>
<feature type="domain" description="RNase H type-2" evidence="2">
    <location>
        <begin position="28"/>
        <end position="216"/>
    </location>
</feature>
<feature type="binding site" evidence="1">
    <location>
        <position position="34"/>
    </location>
    <ligand>
        <name>a divalent metal cation</name>
        <dbReference type="ChEBI" id="CHEBI:60240"/>
    </ligand>
</feature>
<feature type="binding site" evidence="1">
    <location>
        <position position="35"/>
    </location>
    <ligand>
        <name>a divalent metal cation</name>
        <dbReference type="ChEBI" id="CHEBI:60240"/>
    </ligand>
</feature>
<feature type="binding site" evidence="1">
    <location>
        <position position="126"/>
    </location>
    <ligand>
        <name>a divalent metal cation</name>
        <dbReference type="ChEBI" id="CHEBI:60240"/>
    </ligand>
</feature>
<sequence length="216" mass="23062">MKTLNLFPCEERPSLLEFESLVRRQGYACIAGIDEAGRGPLAGPVVAAAVILPNGVELPGVNDSKKLSPVKRNELFDLIMASASAVGVGSSDAGLIDEINILQATLAAMKQAVSMLCIPPDYLLIDGISKVPLSIPQKTIKKGDSLSLSIAAASIIAKVSRDRLMMDYETRFPGYGFAAHKGYGCVSHMAAIAELGPCAIHRKTFRGVKEYVRSEE</sequence>
<organism>
    <name type="scientific">Geotalea uraniireducens (strain Rf4)</name>
    <name type="common">Geobacter uraniireducens</name>
    <dbReference type="NCBI Taxonomy" id="351605"/>
    <lineage>
        <taxon>Bacteria</taxon>
        <taxon>Pseudomonadati</taxon>
        <taxon>Thermodesulfobacteriota</taxon>
        <taxon>Desulfuromonadia</taxon>
        <taxon>Geobacterales</taxon>
        <taxon>Geobacteraceae</taxon>
        <taxon>Geotalea</taxon>
    </lineage>
</organism>
<reference key="1">
    <citation type="submission" date="2007-05" db="EMBL/GenBank/DDBJ databases">
        <title>Complete sequence of Geobacter uraniireducens Rf4.</title>
        <authorList>
            <consortium name="US DOE Joint Genome Institute"/>
            <person name="Copeland A."/>
            <person name="Lucas S."/>
            <person name="Lapidus A."/>
            <person name="Barry K."/>
            <person name="Detter J.C."/>
            <person name="Glavina del Rio T."/>
            <person name="Hammon N."/>
            <person name="Israni S."/>
            <person name="Dalin E."/>
            <person name="Tice H."/>
            <person name="Pitluck S."/>
            <person name="Chertkov O."/>
            <person name="Brettin T."/>
            <person name="Bruce D."/>
            <person name="Han C."/>
            <person name="Schmutz J."/>
            <person name="Larimer F."/>
            <person name="Land M."/>
            <person name="Hauser L."/>
            <person name="Kyrpides N."/>
            <person name="Mikhailova N."/>
            <person name="Shelobolina E."/>
            <person name="Aklujkar M."/>
            <person name="Lovley D."/>
            <person name="Richardson P."/>
        </authorList>
    </citation>
    <scope>NUCLEOTIDE SEQUENCE [LARGE SCALE GENOMIC DNA]</scope>
    <source>
        <strain>ATCC BAA-1134 / JCM 13001 / Rf4</strain>
    </source>
</reference>